<name>CYSD_SALSV</name>
<comment type="function">
    <text evidence="1">With CysN forms the ATP sulfurylase (ATPS) that catalyzes the adenylation of sulfate producing adenosine 5'-phosphosulfate (APS) and diphosphate, the first enzymatic step in sulfur assimilation pathway. APS synthesis involves the formation of a high-energy phosphoric-sulfuric acid anhydride bond driven by GTP hydrolysis by CysN coupled to ATP hydrolysis by CysD.</text>
</comment>
<comment type="catalytic activity">
    <reaction evidence="1">
        <text>sulfate + ATP + H(+) = adenosine 5'-phosphosulfate + diphosphate</text>
        <dbReference type="Rhea" id="RHEA:18133"/>
        <dbReference type="ChEBI" id="CHEBI:15378"/>
        <dbReference type="ChEBI" id="CHEBI:16189"/>
        <dbReference type="ChEBI" id="CHEBI:30616"/>
        <dbReference type="ChEBI" id="CHEBI:33019"/>
        <dbReference type="ChEBI" id="CHEBI:58243"/>
        <dbReference type="EC" id="2.7.7.4"/>
    </reaction>
</comment>
<comment type="pathway">
    <text evidence="1">Sulfur metabolism; hydrogen sulfide biosynthesis; sulfite from sulfate: step 1/3.</text>
</comment>
<comment type="subunit">
    <text evidence="1">Heterodimer composed of CysD, the smaller subunit, and CysN.</text>
</comment>
<comment type="similarity">
    <text evidence="1">Belongs to the PAPS reductase family. CysD subfamily.</text>
</comment>
<keyword id="KW-0067">ATP-binding</keyword>
<keyword id="KW-0547">Nucleotide-binding</keyword>
<keyword id="KW-0548">Nucleotidyltransferase</keyword>
<keyword id="KW-0808">Transferase</keyword>
<organism>
    <name type="scientific">Salmonella schwarzengrund (strain CVM19633)</name>
    <dbReference type="NCBI Taxonomy" id="439843"/>
    <lineage>
        <taxon>Bacteria</taxon>
        <taxon>Pseudomonadati</taxon>
        <taxon>Pseudomonadota</taxon>
        <taxon>Gammaproteobacteria</taxon>
        <taxon>Enterobacterales</taxon>
        <taxon>Enterobacteriaceae</taxon>
        <taxon>Salmonella</taxon>
    </lineage>
</organism>
<sequence length="302" mass="35190">MEQKRLTHLRQLEAESIHIIREVAAEFANPVMLYSIGKDSSVMLHLARKAFYPGTLPFPLLHVDTGWKFREMYAFRDRTANAYGCELLVHKNPEGVAMGINPFVHGSAKHTDIMKTEGLKQALNKYGFDAAFGGARRDEEKSRAKERIYSFRDRFHRWDPKNQRPELWRNYNGQINKGESIRVFPLSNWTEQDIWQYIWLENIDIVPLYLAAERPVLERDGMLMMVDDDRIDLQPGEVIKKRMVRFRTLGCWPLTGAVESHAQTLPEIIEEMLVSTTSERQGRMIDRDQAGSMELKKRQGYF</sequence>
<reference key="1">
    <citation type="journal article" date="2011" name="J. Bacteriol.">
        <title>Comparative genomics of 28 Salmonella enterica isolates: evidence for CRISPR-mediated adaptive sublineage evolution.</title>
        <authorList>
            <person name="Fricke W.F."/>
            <person name="Mammel M.K."/>
            <person name="McDermott P.F."/>
            <person name="Tartera C."/>
            <person name="White D.G."/>
            <person name="Leclerc J.E."/>
            <person name="Ravel J."/>
            <person name="Cebula T.A."/>
        </authorList>
    </citation>
    <scope>NUCLEOTIDE SEQUENCE [LARGE SCALE GENOMIC DNA]</scope>
    <source>
        <strain>CVM19633</strain>
    </source>
</reference>
<protein>
    <recommendedName>
        <fullName evidence="1">Sulfate adenylyltransferase subunit 2</fullName>
        <ecNumber evidence="1">2.7.7.4</ecNumber>
    </recommendedName>
    <alternativeName>
        <fullName evidence="1">ATP-sulfurylase small subunit</fullName>
    </alternativeName>
    <alternativeName>
        <fullName evidence="1">Sulfate adenylate transferase</fullName>
        <shortName evidence="1">SAT</shortName>
    </alternativeName>
</protein>
<evidence type="ECO:0000255" key="1">
    <source>
        <dbReference type="HAMAP-Rule" id="MF_00064"/>
    </source>
</evidence>
<feature type="chain" id="PRO_1000092225" description="Sulfate adenylyltransferase subunit 2">
    <location>
        <begin position="1"/>
        <end position="302"/>
    </location>
</feature>
<gene>
    <name evidence="1" type="primary">cysD</name>
    <name type="ordered locus">SeSA_A3086</name>
</gene>
<proteinExistence type="inferred from homology"/>
<accession>B4TTW6</accession>
<dbReference type="EC" id="2.7.7.4" evidence="1"/>
<dbReference type="EMBL" id="CP001127">
    <property type="protein sequence ID" value="ACF88978.1"/>
    <property type="molecule type" value="Genomic_DNA"/>
</dbReference>
<dbReference type="RefSeq" id="WP_000436059.1">
    <property type="nucleotide sequence ID" value="NC_011094.1"/>
</dbReference>
<dbReference type="SMR" id="B4TTW6"/>
<dbReference type="KEGG" id="sew:SeSA_A3086"/>
<dbReference type="HOGENOM" id="CLU_043026_0_0_6"/>
<dbReference type="UniPathway" id="UPA00140">
    <property type="reaction ID" value="UER00204"/>
</dbReference>
<dbReference type="Proteomes" id="UP000001865">
    <property type="component" value="Chromosome"/>
</dbReference>
<dbReference type="GO" id="GO:0005524">
    <property type="term" value="F:ATP binding"/>
    <property type="evidence" value="ECO:0007669"/>
    <property type="project" value="UniProtKB-KW"/>
</dbReference>
<dbReference type="GO" id="GO:0004781">
    <property type="term" value="F:sulfate adenylyltransferase (ATP) activity"/>
    <property type="evidence" value="ECO:0007669"/>
    <property type="project" value="UniProtKB-UniRule"/>
</dbReference>
<dbReference type="GO" id="GO:0070814">
    <property type="term" value="P:hydrogen sulfide biosynthetic process"/>
    <property type="evidence" value="ECO:0007669"/>
    <property type="project" value="UniProtKB-UniRule"/>
</dbReference>
<dbReference type="GO" id="GO:0000103">
    <property type="term" value="P:sulfate assimilation"/>
    <property type="evidence" value="ECO:0007669"/>
    <property type="project" value="UniProtKB-UniRule"/>
</dbReference>
<dbReference type="CDD" id="cd23946">
    <property type="entry name" value="Sulfate_adenylyltransferase_2"/>
    <property type="match status" value="1"/>
</dbReference>
<dbReference type="FunFam" id="3.40.50.620:FF:000002">
    <property type="entry name" value="Sulfate adenylyltransferase subunit 2"/>
    <property type="match status" value="1"/>
</dbReference>
<dbReference type="Gene3D" id="3.40.50.620">
    <property type="entry name" value="HUPs"/>
    <property type="match status" value="1"/>
</dbReference>
<dbReference type="HAMAP" id="MF_00064">
    <property type="entry name" value="Sulf_adenylyltr_sub2"/>
    <property type="match status" value="1"/>
</dbReference>
<dbReference type="InterPro" id="IPR002500">
    <property type="entry name" value="PAPS_reduct_dom"/>
</dbReference>
<dbReference type="InterPro" id="IPR014729">
    <property type="entry name" value="Rossmann-like_a/b/a_fold"/>
</dbReference>
<dbReference type="InterPro" id="IPR011784">
    <property type="entry name" value="SO4_adenylTrfase_ssu"/>
</dbReference>
<dbReference type="InterPro" id="IPR050128">
    <property type="entry name" value="Sulfate_adenylyltrnsfr_sub2"/>
</dbReference>
<dbReference type="NCBIfam" id="TIGR02039">
    <property type="entry name" value="CysD"/>
    <property type="match status" value="1"/>
</dbReference>
<dbReference type="NCBIfam" id="NF003587">
    <property type="entry name" value="PRK05253.1"/>
    <property type="match status" value="1"/>
</dbReference>
<dbReference type="NCBIfam" id="NF009214">
    <property type="entry name" value="PRK12563.1"/>
    <property type="match status" value="1"/>
</dbReference>
<dbReference type="PANTHER" id="PTHR43196">
    <property type="entry name" value="SULFATE ADENYLYLTRANSFERASE SUBUNIT 2"/>
    <property type="match status" value="1"/>
</dbReference>
<dbReference type="PANTHER" id="PTHR43196:SF1">
    <property type="entry name" value="SULFATE ADENYLYLTRANSFERASE SUBUNIT 2"/>
    <property type="match status" value="1"/>
</dbReference>
<dbReference type="Pfam" id="PF01507">
    <property type="entry name" value="PAPS_reduct"/>
    <property type="match status" value="1"/>
</dbReference>
<dbReference type="PIRSF" id="PIRSF002936">
    <property type="entry name" value="CysDAde_trans"/>
    <property type="match status" value="1"/>
</dbReference>
<dbReference type="SUPFAM" id="SSF52402">
    <property type="entry name" value="Adenine nucleotide alpha hydrolases-like"/>
    <property type="match status" value="1"/>
</dbReference>